<feature type="chain" id="PRO_0000195800" description="Xylose isomerase">
    <location>
        <begin position="1"/>
        <end position="395"/>
    </location>
</feature>
<feature type="region of interest" description="Disordered" evidence="2">
    <location>
        <begin position="80"/>
        <end position="108"/>
    </location>
</feature>
<feature type="active site" evidence="1">
    <location>
        <position position="54"/>
    </location>
</feature>
<feature type="active site" evidence="1">
    <location>
        <position position="57"/>
    </location>
</feature>
<feature type="binding site" evidence="1">
    <location>
        <position position="189"/>
    </location>
    <ligand>
        <name>Mg(2+)</name>
        <dbReference type="ChEBI" id="CHEBI:18420"/>
        <label>1</label>
    </ligand>
</feature>
<feature type="binding site" evidence="1">
    <location>
        <position position="225"/>
    </location>
    <ligand>
        <name>Mg(2+)</name>
        <dbReference type="ChEBI" id="CHEBI:18420"/>
        <label>1</label>
    </ligand>
</feature>
<feature type="binding site" evidence="1">
    <location>
        <position position="225"/>
    </location>
    <ligand>
        <name>Mg(2+)</name>
        <dbReference type="ChEBI" id="CHEBI:18420"/>
        <label>2</label>
    </ligand>
</feature>
<feature type="binding site" evidence="1">
    <location>
        <position position="228"/>
    </location>
    <ligand>
        <name>Mg(2+)</name>
        <dbReference type="ChEBI" id="CHEBI:18420"/>
        <label>2</label>
    </ligand>
</feature>
<feature type="binding site" evidence="1">
    <location>
        <position position="253"/>
    </location>
    <ligand>
        <name>Mg(2+)</name>
        <dbReference type="ChEBI" id="CHEBI:18420"/>
        <label>1</label>
    </ligand>
</feature>
<feature type="binding site" evidence="1">
    <location>
        <position position="263"/>
    </location>
    <ligand>
        <name>Mg(2+)</name>
        <dbReference type="ChEBI" id="CHEBI:18420"/>
        <label>2</label>
    </ligand>
</feature>
<feature type="binding site" evidence="1">
    <location>
        <position position="265"/>
    </location>
    <ligand>
        <name>Mg(2+)</name>
        <dbReference type="ChEBI" id="CHEBI:18420"/>
        <label>2</label>
    </ligand>
</feature>
<feature type="binding site" evidence="1">
    <location>
        <position position="295"/>
    </location>
    <ligand>
        <name>Mg(2+)</name>
        <dbReference type="ChEBI" id="CHEBI:18420"/>
        <label>1</label>
    </ligand>
</feature>
<evidence type="ECO:0000255" key="1">
    <source>
        <dbReference type="HAMAP-Rule" id="MF_00455"/>
    </source>
</evidence>
<evidence type="ECO:0000256" key="2">
    <source>
        <dbReference type="SAM" id="MobiDB-lite"/>
    </source>
</evidence>
<organism>
    <name type="scientific">Streptomyces lividans</name>
    <dbReference type="NCBI Taxonomy" id="1916"/>
    <lineage>
        <taxon>Bacteria</taxon>
        <taxon>Bacillati</taxon>
        <taxon>Actinomycetota</taxon>
        <taxon>Actinomycetes</taxon>
        <taxon>Kitasatosporales</taxon>
        <taxon>Streptomycetaceae</taxon>
        <taxon>Streptomyces</taxon>
    </lineage>
</organism>
<comment type="catalytic activity">
    <reaction evidence="1">
        <text>alpha-D-xylose = alpha-D-xylulofuranose</text>
        <dbReference type="Rhea" id="RHEA:22816"/>
        <dbReference type="ChEBI" id="CHEBI:28518"/>
        <dbReference type="ChEBI" id="CHEBI:188998"/>
        <dbReference type="EC" id="5.3.1.5"/>
    </reaction>
</comment>
<comment type="cofactor">
    <cofactor evidence="1">
        <name>Mg(2+)</name>
        <dbReference type="ChEBI" id="CHEBI:18420"/>
    </cofactor>
    <text evidence="1">Binds 2 magnesium ions per subunit.</text>
</comment>
<comment type="subunit">
    <text evidence="1">Homotetramer.</text>
</comment>
<comment type="subcellular location">
    <subcellularLocation>
        <location evidence="1">Cytoplasm</location>
    </subcellularLocation>
</comment>
<comment type="similarity">
    <text evidence="1">Belongs to the xylose isomerase family.</text>
</comment>
<dbReference type="EC" id="5.3.1.5" evidence="1"/>
<dbReference type="EMBL" id="AF184899">
    <property type="protein sequence ID" value="AAF25626.1"/>
    <property type="molecule type" value="Genomic_DNA"/>
</dbReference>
<dbReference type="SMR" id="Q9RFM4"/>
<dbReference type="GO" id="GO:0005737">
    <property type="term" value="C:cytoplasm"/>
    <property type="evidence" value="ECO:0007669"/>
    <property type="project" value="UniProtKB-SubCell"/>
</dbReference>
<dbReference type="GO" id="GO:0000287">
    <property type="term" value="F:magnesium ion binding"/>
    <property type="evidence" value="ECO:0007669"/>
    <property type="project" value="UniProtKB-UniRule"/>
</dbReference>
<dbReference type="GO" id="GO:0009045">
    <property type="term" value="F:xylose isomerase activity"/>
    <property type="evidence" value="ECO:0007669"/>
    <property type="project" value="UniProtKB-UniRule"/>
</dbReference>
<dbReference type="GO" id="GO:0042732">
    <property type="term" value="P:D-xylose metabolic process"/>
    <property type="evidence" value="ECO:0007669"/>
    <property type="project" value="UniProtKB-UniRule"/>
</dbReference>
<dbReference type="Gene3D" id="3.20.20.150">
    <property type="entry name" value="Divalent-metal-dependent TIM barrel enzymes"/>
    <property type="match status" value="1"/>
</dbReference>
<dbReference type="HAMAP" id="MF_00455">
    <property type="entry name" value="Xylose_isom_A"/>
    <property type="match status" value="1"/>
</dbReference>
<dbReference type="InterPro" id="IPR036237">
    <property type="entry name" value="Xyl_isomerase-like_sf"/>
</dbReference>
<dbReference type="InterPro" id="IPR013453">
    <property type="entry name" value="XylA_actinobac"/>
</dbReference>
<dbReference type="InterPro" id="IPR001998">
    <property type="entry name" value="Xylose_isomerase"/>
</dbReference>
<dbReference type="NCBIfam" id="TIGR02631">
    <property type="entry name" value="xylA_Arthro"/>
    <property type="match status" value="1"/>
</dbReference>
<dbReference type="PRINTS" id="PR00688">
    <property type="entry name" value="XYLOSISMRASE"/>
</dbReference>
<dbReference type="SUPFAM" id="SSF51658">
    <property type="entry name" value="Xylose isomerase-like"/>
    <property type="match status" value="1"/>
</dbReference>
<dbReference type="PROSITE" id="PS51415">
    <property type="entry name" value="XYLOSE_ISOMERASE"/>
    <property type="match status" value="1"/>
</dbReference>
<accession>Q9RFM4</accession>
<keyword id="KW-0119">Carbohydrate metabolism</keyword>
<keyword id="KW-0963">Cytoplasm</keyword>
<keyword id="KW-0413">Isomerase</keyword>
<keyword id="KW-0460">Magnesium</keyword>
<keyword id="KW-0479">Metal-binding</keyword>
<keyword id="KW-0859">Xylose metabolism</keyword>
<proteinExistence type="inferred from homology"/>
<name>XYLA_STRLI</name>
<protein>
    <recommendedName>
        <fullName evidence="1">Xylose isomerase</fullName>
        <ecNumber evidence="1">5.3.1.5</ecNumber>
    </recommendedName>
</protein>
<gene>
    <name evidence="1" type="primary">xylA</name>
</gene>
<sequence>MNYQPTSEDRFTFGLWTVGWQGLDPFGDATREALDPAESVRRLSQLGAYGVTFHDDELIPFGSSDNERGVAHGAGVAHQAVPAGAGRDRHEGADGDDEPVHAPGCSRDGAFTANDRDVRGTRCARAIRNIDLAVEHVARASTCAWGGREGAESGAAKDVRDALDRMKEAFDLLGEYVTEQGYDLKFAIEPKPNEPRGDILLPTVGHALAFIERLERPELYGVNPEVGHEQMAGLNFPHGIAQALWAGKLFHIDLNGQSGIKYDQDLRFGAGDLRAAFWLVDLLERAGYAGPRHFDFKPPRTENFDAVWPSAAGCMRNYLILKDRAAAFRADPQVQEALAAARLDELARPTAEDGLAALLADRSAYDTFDVDAAAARGMAFEHLDQLAMDHLLGAR</sequence>
<reference key="1">
    <citation type="submission" date="1999-09" db="EMBL/GenBank/DDBJ databases">
        <title>Streptomyces lividans TK24 xylR/putative xylose operon regulator, TK24 xylB/xylulose kinase, xylA/xylose isomerase.</title>
        <authorList>
            <person name="Heo G.-Y."/>
            <person name="Shin J.-H."/>
            <person name="Roh D.-H."/>
            <person name="Joo G.-J."/>
            <person name="Rhee I.-K."/>
        </authorList>
    </citation>
    <scope>NUCLEOTIDE SEQUENCE [GENOMIC DNA]</scope>
    <source>
        <strain>TK24</strain>
    </source>
</reference>